<proteinExistence type="evidence at transcript level"/>
<dbReference type="EMBL" id="CR858495">
    <property type="protein sequence ID" value="CAH90723.1"/>
    <property type="molecule type" value="mRNA"/>
</dbReference>
<dbReference type="RefSeq" id="NP_001125402.1">
    <property type="nucleotide sequence ID" value="NM_001131930.1"/>
</dbReference>
<dbReference type="FunCoup" id="Q5RBY7">
    <property type="interactions" value="1257"/>
</dbReference>
<dbReference type="STRING" id="9601.ENSPPYP00000005104"/>
<dbReference type="GeneID" id="100172307"/>
<dbReference type="KEGG" id="pon:100172307"/>
<dbReference type="CTD" id="55716"/>
<dbReference type="eggNOG" id="KOG3722">
    <property type="taxonomic scope" value="Eukaryota"/>
</dbReference>
<dbReference type="InParanoid" id="Q5RBY7"/>
<dbReference type="OrthoDB" id="5596951at2759"/>
<dbReference type="Proteomes" id="UP000001595">
    <property type="component" value="Unplaced"/>
</dbReference>
<dbReference type="GO" id="GO:0005789">
    <property type="term" value="C:endoplasmic reticulum membrane"/>
    <property type="evidence" value="ECO:0000250"/>
    <property type="project" value="UniProtKB"/>
</dbReference>
<dbReference type="GO" id="GO:0005886">
    <property type="term" value="C:plasma membrane"/>
    <property type="evidence" value="ECO:0000250"/>
    <property type="project" value="UniProtKB"/>
</dbReference>
<dbReference type="GO" id="GO:0004888">
    <property type="term" value="F:transmembrane signaling receptor activity"/>
    <property type="evidence" value="ECO:0007669"/>
    <property type="project" value="TreeGrafter"/>
</dbReference>
<dbReference type="GO" id="GO:0060218">
    <property type="term" value="P:hematopoietic stem cell differentiation"/>
    <property type="evidence" value="ECO:0000250"/>
    <property type="project" value="UniProtKB"/>
</dbReference>
<dbReference type="GO" id="GO:0090090">
    <property type="term" value="P:negative regulation of canonical Wnt signaling pathway"/>
    <property type="evidence" value="ECO:0000250"/>
    <property type="project" value="UniProtKB"/>
</dbReference>
<dbReference type="GO" id="GO:0006898">
    <property type="term" value="P:receptor-mediated endocytosis"/>
    <property type="evidence" value="ECO:0007669"/>
    <property type="project" value="TreeGrafter"/>
</dbReference>
<dbReference type="GO" id="GO:0070231">
    <property type="term" value="P:T cell apoptotic process"/>
    <property type="evidence" value="ECO:0000250"/>
    <property type="project" value="UniProtKB"/>
</dbReference>
<dbReference type="GO" id="GO:0030217">
    <property type="term" value="P:T cell differentiation"/>
    <property type="evidence" value="ECO:0000250"/>
    <property type="project" value="UniProtKB"/>
</dbReference>
<dbReference type="GO" id="GO:0042098">
    <property type="term" value="P:T cell proliferation"/>
    <property type="evidence" value="ECO:0000250"/>
    <property type="project" value="UniProtKB"/>
</dbReference>
<dbReference type="GO" id="GO:0016055">
    <property type="term" value="P:Wnt signaling pathway"/>
    <property type="evidence" value="ECO:0007669"/>
    <property type="project" value="UniProtKB-KW"/>
</dbReference>
<dbReference type="InterPro" id="IPR008075">
    <property type="entry name" value="LIMR"/>
</dbReference>
<dbReference type="InterPro" id="IPR006876">
    <property type="entry name" value="LMBR1-like_membr_prot"/>
</dbReference>
<dbReference type="PANTHER" id="PTHR12625">
    <property type="entry name" value="LIPOCALIN-1 INTERACTING MEMBRANE RECEPTOR LIMR"/>
    <property type="match status" value="1"/>
</dbReference>
<dbReference type="PANTHER" id="PTHR12625:SF2">
    <property type="entry name" value="PROTEIN LMBR1L"/>
    <property type="match status" value="1"/>
</dbReference>
<dbReference type="Pfam" id="PF04791">
    <property type="entry name" value="LMBR1"/>
    <property type="match status" value="2"/>
</dbReference>
<dbReference type="PRINTS" id="PR01692">
    <property type="entry name" value="LIPOCALINIMR"/>
</dbReference>
<evidence type="ECO:0000250" key="1">
    <source>
        <dbReference type="UniProtKB" id="Q6UX01"/>
    </source>
</evidence>
<evidence type="ECO:0000250" key="2">
    <source>
        <dbReference type="UniProtKB" id="Q9D1E5"/>
    </source>
</evidence>
<evidence type="ECO:0000255" key="3"/>
<evidence type="ECO:0000305" key="4"/>
<comment type="function">
    <text evidence="1 2">Plays an essential role in lymphocyte development by negatively regulating the canonical Wnt signaling pathway (By similarity). In association with UBAC2 and E3 ubiquitin-protein ligase AMFR, promotes the ubiquitin-mediated degradation of CTNNB1 and Wnt receptors FZD6 and LRP6 (By similarity). LMBR1L stabilizes the beta-catenin destruction complex that is required for regulating CTNNB1 levels (By similarity). Acts as a LCN1 receptor and can mediate its endocytosis (By similarity).</text>
</comment>
<comment type="subunit">
    <text evidence="1 2">Dimer (By similarity). Can also form higher oligomers (By similarity). Interacts with LCN1; this interaction mediates the endocytosis of LCN1 (By similarity). Interacts with UBAC2, FAF2, VCP, AMFR, ZNRF3, CTNNB1, LRP6, GSK3A, GSK3B, FZD6, DVL2 and RNF43 (By similarity). Interaction with LGB and SCGB1A1 is controversial (By similarity).</text>
</comment>
<comment type="subcellular location">
    <subcellularLocation>
        <location evidence="1">Cell membrane</location>
        <topology evidence="3">Multi-pass membrane protein</topology>
    </subcellularLocation>
    <subcellularLocation>
        <location evidence="1">Endoplasmic reticulum membrane</location>
        <topology evidence="3">Multi-pass membrane protein</topology>
    </subcellularLocation>
</comment>
<comment type="similarity">
    <text evidence="4">Belongs to the LIMR family.</text>
</comment>
<reference key="1">
    <citation type="submission" date="2004-11" db="EMBL/GenBank/DDBJ databases">
        <authorList>
            <consortium name="The German cDNA consortium"/>
        </authorList>
    </citation>
    <scope>NUCLEOTIDE SEQUENCE [LARGE SCALE MRNA]</scope>
    <source>
        <tissue>Kidney</tissue>
    </source>
</reference>
<gene>
    <name type="primary">LMBR1L</name>
</gene>
<organism>
    <name type="scientific">Pongo abelii</name>
    <name type="common">Sumatran orangutan</name>
    <name type="synonym">Pongo pygmaeus abelii</name>
    <dbReference type="NCBI Taxonomy" id="9601"/>
    <lineage>
        <taxon>Eukaryota</taxon>
        <taxon>Metazoa</taxon>
        <taxon>Chordata</taxon>
        <taxon>Craniata</taxon>
        <taxon>Vertebrata</taxon>
        <taxon>Euteleostomi</taxon>
        <taxon>Mammalia</taxon>
        <taxon>Eutheria</taxon>
        <taxon>Euarchontoglires</taxon>
        <taxon>Primates</taxon>
        <taxon>Haplorrhini</taxon>
        <taxon>Catarrhini</taxon>
        <taxon>Hominidae</taxon>
        <taxon>Pongo</taxon>
    </lineage>
</organism>
<accession>Q5RBY7</accession>
<protein>
    <recommendedName>
        <fullName>Protein LMBR1L</fullName>
    </recommendedName>
    <alternativeName>
        <fullName evidence="1">Lipocalin-1-interacting membrane receptor</fullName>
        <shortName evidence="1">LIMR</shortName>
    </alternativeName>
</protein>
<name>LMBRL_PONAB</name>
<feature type="chain" id="PRO_0000053913" description="Protein LMBR1L">
    <location>
        <begin position="1"/>
        <end position="490"/>
    </location>
</feature>
<feature type="topological domain" description="Extracellular" evidence="3">
    <location>
        <begin position="1"/>
        <end position="21"/>
    </location>
</feature>
<feature type="transmembrane region" description="Helical" evidence="3">
    <location>
        <begin position="22"/>
        <end position="42"/>
    </location>
</feature>
<feature type="topological domain" description="Cytoplasmic" evidence="3">
    <location>
        <begin position="43"/>
        <end position="66"/>
    </location>
</feature>
<feature type="transmembrane region" description="Helical" evidence="3">
    <location>
        <begin position="67"/>
        <end position="87"/>
    </location>
</feature>
<feature type="topological domain" description="Extracellular" evidence="3">
    <location>
        <begin position="88"/>
        <end position="114"/>
    </location>
</feature>
<feature type="transmembrane region" description="Helical" evidence="3">
    <location>
        <begin position="115"/>
        <end position="135"/>
    </location>
</feature>
<feature type="topological domain" description="Cytoplasmic" evidence="3">
    <location>
        <begin position="136"/>
        <end position="154"/>
    </location>
</feature>
<feature type="transmembrane region" description="Helical" evidence="3">
    <location>
        <begin position="155"/>
        <end position="175"/>
    </location>
</feature>
<feature type="topological domain" description="Extracellular" evidence="3">
    <location>
        <begin position="176"/>
        <end position="196"/>
    </location>
</feature>
<feature type="transmembrane region" description="Helical" evidence="3">
    <location>
        <begin position="197"/>
        <end position="217"/>
    </location>
</feature>
<feature type="topological domain" description="Cytoplasmic" evidence="3">
    <location>
        <begin position="218"/>
        <end position="305"/>
    </location>
</feature>
<feature type="transmembrane region" description="Helical" evidence="3">
    <location>
        <begin position="306"/>
        <end position="326"/>
    </location>
</feature>
<feature type="topological domain" description="Extracellular" evidence="3">
    <location>
        <begin position="327"/>
        <end position="350"/>
    </location>
</feature>
<feature type="transmembrane region" description="Helical" evidence="3">
    <location>
        <begin position="351"/>
        <end position="371"/>
    </location>
</feature>
<feature type="topological domain" description="Cytoplasmic" evidence="3">
    <location>
        <begin position="372"/>
        <end position="388"/>
    </location>
</feature>
<feature type="transmembrane region" description="Helical" evidence="3">
    <location>
        <begin position="389"/>
        <end position="409"/>
    </location>
</feature>
<feature type="topological domain" description="Extracellular" evidence="3">
    <location>
        <begin position="410"/>
        <end position="431"/>
    </location>
</feature>
<feature type="transmembrane region" description="Helical" evidence="3">
    <location>
        <begin position="432"/>
        <end position="452"/>
    </location>
</feature>
<feature type="topological domain" description="Cytoplasmic" evidence="3">
    <location>
        <begin position="453"/>
        <end position="490"/>
    </location>
</feature>
<feature type="region of interest" description="LCN1-binding" evidence="1">
    <location>
        <begin position="1"/>
        <end position="76"/>
    </location>
</feature>
<feature type="region of interest" description="Interaction with LGB" evidence="1">
    <location>
        <begin position="1"/>
        <end position="59"/>
    </location>
</feature>
<keyword id="KW-1003">Cell membrane</keyword>
<keyword id="KW-0254">Endocytosis</keyword>
<keyword id="KW-0256">Endoplasmic reticulum</keyword>
<keyword id="KW-0472">Membrane</keyword>
<keyword id="KW-0675">Receptor</keyword>
<keyword id="KW-1185">Reference proteome</keyword>
<keyword id="KW-0812">Transmembrane</keyword>
<keyword id="KW-1133">Transmembrane helix</keyword>
<keyword id="KW-0879">Wnt signaling pathway</keyword>
<sequence>MEAPDYEVLSVREQLFHERIRECIISTLLFATLYILCHIFLTRFKKPAEFTTVDDEDATVNKIALELCTFTLAIALGAVLLLPFSIISNEVLLSLPRNYYIQWLNGSLIHGLWNLVFLFSNLSLIFLMPFAYFFTESEGFAGSRRGVLGRVYETVVMLMLLTLLVLGMVWVASAILDNNKASRESLYDFWEYYLPYLYSCISFLGVLLLLVCTPLGLARMFSVTGKLLVKPRLLEDLEEQLYCSAFEEAAPTRRICNPTSCWLPLDMELLHRQVLALQTQRVLLEKRRKASAWQRNLGYPLAMLCLLVLTGLSVLIVAIHILELLIDEAAMPRGMQDASLGQVSFSRLGSFGAVIQVALIFYLMVSSVVGFYSSPLFRSLRPRWHDTAMTQIIGNCVCLLVLSSALPVFSRTLGLTRFDLLGDFGRFNWLGNFYIVFLYNAAFAGLTTLCLVKTFTAAVRAELIRAFGLDRLPLPVSGFPPRASRKTQHQ</sequence>